<accession>B7NTE7</accession>
<name>WECG_ECO7I</name>
<evidence type="ECO:0000255" key="1">
    <source>
        <dbReference type="HAMAP-Rule" id="MF_01001"/>
    </source>
</evidence>
<reference key="1">
    <citation type="journal article" date="2009" name="PLoS Genet.">
        <title>Organised genome dynamics in the Escherichia coli species results in highly diverse adaptive paths.</title>
        <authorList>
            <person name="Touchon M."/>
            <person name="Hoede C."/>
            <person name="Tenaillon O."/>
            <person name="Barbe V."/>
            <person name="Baeriswyl S."/>
            <person name="Bidet P."/>
            <person name="Bingen E."/>
            <person name="Bonacorsi S."/>
            <person name="Bouchier C."/>
            <person name="Bouvet O."/>
            <person name="Calteau A."/>
            <person name="Chiapello H."/>
            <person name="Clermont O."/>
            <person name="Cruveiller S."/>
            <person name="Danchin A."/>
            <person name="Diard M."/>
            <person name="Dossat C."/>
            <person name="Karoui M.E."/>
            <person name="Frapy E."/>
            <person name="Garry L."/>
            <person name="Ghigo J.M."/>
            <person name="Gilles A.M."/>
            <person name="Johnson J."/>
            <person name="Le Bouguenec C."/>
            <person name="Lescat M."/>
            <person name="Mangenot S."/>
            <person name="Martinez-Jehanne V."/>
            <person name="Matic I."/>
            <person name="Nassif X."/>
            <person name="Oztas S."/>
            <person name="Petit M.A."/>
            <person name="Pichon C."/>
            <person name="Rouy Z."/>
            <person name="Ruf C.S."/>
            <person name="Schneider D."/>
            <person name="Tourret J."/>
            <person name="Vacherie B."/>
            <person name="Vallenet D."/>
            <person name="Medigue C."/>
            <person name="Rocha E.P.C."/>
            <person name="Denamur E."/>
        </authorList>
    </citation>
    <scope>NUCLEOTIDE SEQUENCE [LARGE SCALE GENOMIC DNA]</scope>
    <source>
        <strain>IAI39 / ExPEC</strain>
    </source>
</reference>
<dbReference type="EC" id="2.4.1.180" evidence="1"/>
<dbReference type="EMBL" id="CU928164">
    <property type="protein sequence ID" value="CAR19111.1"/>
    <property type="molecule type" value="Genomic_DNA"/>
</dbReference>
<dbReference type="RefSeq" id="WP_001064043.1">
    <property type="nucleotide sequence ID" value="NC_011750.1"/>
</dbReference>
<dbReference type="RefSeq" id="YP_002408920.1">
    <property type="nucleotide sequence ID" value="NC_011750.1"/>
</dbReference>
<dbReference type="SMR" id="B7NTE7"/>
<dbReference type="STRING" id="585057.ECIAI39_2992"/>
<dbReference type="CAZy" id="GT26">
    <property type="family name" value="Glycosyltransferase Family 26"/>
</dbReference>
<dbReference type="KEGG" id="ect:ECIAI39_2992"/>
<dbReference type="PATRIC" id="fig|585057.6.peg.3105"/>
<dbReference type="HOGENOM" id="CLU_063203_3_2_6"/>
<dbReference type="UniPathway" id="UPA00566"/>
<dbReference type="Proteomes" id="UP000000749">
    <property type="component" value="Chromosome"/>
</dbReference>
<dbReference type="GO" id="GO:0047241">
    <property type="term" value="F:lipopolysaccharide N-acetylmannosaminouronosyltransferase activity"/>
    <property type="evidence" value="ECO:0007669"/>
    <property type="project" value="UniProtKB-UniRule"/>
</dbReference>
<dbReference type="GO" id="GO:0009246">
    <property type="term" value="P:enterobacterial common antigen biosynthetic process"/>
    <property type="evidence" value="ECO:0007669"/>
    <property type="project" value="UniProtKB-UniRule"/>
</dbReference>
<dbReference type="CDD" id="cd06533">
    <property type="entry name" value="Glyco_transf_WecG_TagA"/>
    <property type="match status" value="1"/>
</dbReference>
<dbReference type="HAMAP" id="MF_01001">
    <property type="entry name" value="WecG_RffM"/>
    <property type="match status" value="1"/>
</dbReference>
<dbReference type="InterPro" id="IPR023085">
    <property type="entry name" value="UDP-ManNAcA_Trfase_WecG"/>
</dbReference>
<dbReference type="InterPro" id="IPR004629">
    <property type="entry name" value="WecG_TagA_CpsF"/>
</dbReference>
<dbReference type="NCBIfam" id="NF002980">
    <property type="entry name" value="PRK03692.1"/>
    <property type="match status" value="1"/>
</dbReference>
<dbReference type="NCBIfam" id="TIGR00696">
    <property type="entry name" value="wecG_tagA_cpsF"/>
    <property type="match status" value="1"/>
</dbReference>
<dbReference type="PANTHER" id="PTHR34136">
    <property type="match status" value="1"/>
</dbReference>
<dbReference type="PANTHER" id="PTHR34136:SF1">
    <property type="entry name" value="UDP-N-ACETYL-D-MANNOSAMINURONIC ACID TRANSFERASE"/>
    <property type="match status" value="1"/>
</dbReference>
<dbReference type="Pfam" id="PF03808">
    <property type="entry name" value="Glyco_tran_WecG"/>
    <property type="match status" value="1"/>
</dbReference>
<sequence length="246" mass="27992">MNNNTTAPTYTLRGLQLIGWRDMQHALDYLFADGQLKQGTLVAINAEKMLTIEDNAEVRELINAAEFKYADGISVVRSVRKKYPQAQVSRVAGADLWEELMARAGKEGTPVFLVGGKPEVLAQTETKLRNQWNVNIVGSQDGYFKPEQRQALFERIHASGAQIVTVAMGSPKQEIFMRDCRLVHPDALYMGVGGTYDVFTGHVKRAPKIWQTLGLEWLYRLLSQPSRIKRQLRLLRYLRWHYTGNL</sequence>
<keyword id="KW-0328">Glycosyltransferase</keyword>
<keyword id="KW-0808">Transferase</keyword>
<proteinExistence type="inferred from homology"/>
<protein>
    <recommendedName>
        <fullName evidence="1">UDP-N-acetyl-D-mannosaminuronic acid transferase</fullName>
        <shortName evidence="1">UDP-ManNAcA transferase</shortName>
        <ecNumber evidence="1">2.4.1.180</ecNumber>
    </recommendedName>
</protein>
<organism>
    <name type="scientific">Escherichia coli O7:K1 (strain IAI39 / ExPEC)</name>
    <dbReference type="NCBI Taxonomy" id="585057"/>
    <lineage>
        <taxon>Bacteria</taxon>
        <taxon>Pseudomonadati</taxon>
        <taxon>Pseudomonadota</taxon>
        <taxon>Gammaproteobacteria</taxon>
        <taxon>Enterobacterales</taxon>
        <taxon>Enterobacteriaceae</taxon>
        <taxon>Escherichia</taxon>
    </lineage>
</organism>
<gene>
    <name evidence="1" type="primary">wecG</name>
    <name evidence="1" type="synonym">rffM</name>
    <name type="ordered locus">ECIAI39_2992</name>
</gene>
<comment type="function">
    <text evidence="1">Catalyzes the synthesis of Und-PP-GlcNAc-ManNAcA (Lipid II), the second lipid-linked intermediate involved in enterobacterial common antigen (ECA) synthesis.</text>
</comment>
<comment type="catalytic activity">
    <reaction evidence="1">
        <text>UDP-N-acetyl-alpha-D-mannosaminouronate + N-acetyl-alpha-D-glucosaminyl-di-trans,octa-cis-undecaprenyl diphosphate = beta-D-ManNAcA-(1-&gt;4)-alpha-D-GlcNAc-di-trans,octa-cis-undecaprenyl diphosphate + UDP + H(+)</text>
        <dbReference type="Rhea" id="RHEA:28366"/>
        <dbReference type="ChEBI" id="CHEBI:15378"/>
        <dbReference type="ChEBI" id="CHEBI:58223"/>
        <dbReference type="ChEBI" id="CHEBI:61495"/>
        <dbReference type="ChEBI" id="CHEBI:62959"/>
        <dbReference type="ChEBI" id="CHEBI:70731"/>
        <dbReference type="EC" id="2.4.1.180"/>
    </reaction>
</comment>
<comment type="pathway">
    <text evidence="1">Bacterial outer membrane biogenesis; enterobacterial common antigen biosynthesis.</text>
</comment>
<comment type="similarity">
    <text evidence="1">Belongs to the glycosyltransferase 26 family.</text>
</comment>
<feature type="chain" id="PRO_1000134573" description="UDP-N-acetyl-D-mannosaminuronic acid transferase">
    <location>
        <begin position="1"/>
        <end position="246"/>
    </location>
</feature>